<protein>
    <recommendedName>
        <fullName>26S proteasome regulatory subunit 6B homolog</fullName>
    </recommendedName>
</protein>
<comment type="function">
    <text evidence="1">Acts as a regulatory subunit of the 26S proteasome which degrades poly-ubiquitinated proteins in the cytoplasm and in the nucleus. It is essential for the regulated turnover of proteins and for the removal of misfolded proteins. The proteasome is a multicatalytic proteinase complex that is characterized by its ability to cleave peptides with Arg, Phe, Tyr, Leu, and Glu adjacent to the leaving group at neutral or slightly basic pH (By similarity).</text>
</comment>
<comment type="subunit">
    <text evidence="1">The 26S proteasome consists of a 20S proteasome core and two 19S regulatory subunits. The 20S proteasome core is composed of 28 subunits that are arranged in four stacked rings, resulting in a barrel-shaped structure. The two end rings are each formed by seven alpha subunits, and the two central rings are each formed by seven beta subunits. The catalytic chamber with the active sites is on the inside of the barrel (By similarity).</text>
</comment>
<comment type="subcellular location">
    <subcellularLocation>
        <location evidence="1">Cytoplasm</location>
    </subcellularLocation>
    <subcellularLocation>
        <location evidence="1">Nucleus</location>
    </subcellularLocation>
</comment>
<comment type="developmental stage">
    <text evidence="3">Expressed in late sporogonial stages.</text>
</comment>
<comment type="similarity">
    <text evidence="4">Belongs to the AAA ATPase family.</text>
</comment>
<dbReference type="EMBL" id="AL590448">
    <property type="protein sequence ID" value="CAD26499.1"/>
    <property type="molecule type" value="Genomic_DNA"/>
</dbReference>
<dbReference type="EMBL" id="AL590449">
    <property type="protein sequence ID" value="CAD25732.1"/>
    <property type="molecule type" value="Genomic_DNA"/>
</dbReference>
<dbReference type="RefSeq" id="NP_586128.1">
    <property type="nucleotide sequence ID" value="NM_001041961.1"/>
</dbReference>
<dbReference type="RefSeq" id="NP_597323.1">
    <property type="nucleotide sequence ID" value="NM_001041932.1"/>
</dbReference>
<dbReference type="SMR" id="Q8SQI9"/>
<dbReference type="FunCoup" id="Q8SQI9">
    <property type="interactions" value="229"/>
</dbReference>
<dbReference type="STRING" id="284813.Q8SQI9"/>
<dbReference type="GeneID" id="859745"/>
<dbReference type="GeneID" id="859774"/>
<dbReference type="KEGG" id="ecu:ECU08_1970"/>
<dbReference type="KEGG" id="ecu:ECU10_0130"/>
<dbReference type="VEuPathDB" id="MicrosporidiaDB:ECU08_1970"/>
<dbReference type="VEuPathDB" id="MicrosporidiaDB:ECU10_0130"/>
<dbReference type="HOGENOM" id="CLU_000688_2_0_1"/>
<dbReference type="InParanoid" id="Q8SQI9"/>
<dbReference type="OMA" id="QDIGGMD"/>
<dbReference type="OrthoDB" id="10255768at2759"/>
<dbReference type="Proteomes" id="UP000000819">
    <property type="component" value="Chromosome VIII"/>
</dbReference>
<dbReference type="Proteomes" id="UP000000819">
    <property type="component" value="Chromosome X"/>
</dbReference>
<dbReference type="GO" id="GO:0005737">
    <property type="term" value="C:cytoplasm"/>
    <property type="evidence" value="ECO:0007669"/>
    <property type="project" value="UniProtKB-SubCell"/>
</dbReference>
<dbReference type="GO" id="GO:0005634">
    <property type="term" value="C:nucleus"/>
    <property type="evidence" value="ECO:0007669"/>
    <property type="project" value="UniProtKB-SubCell"/>
</dbReference>
<dbReference type="GO" id="GO:0008540">
    <property type="term" value="C:proteasome regulatory particle, base subcomplex"/>
    <property type="evidence" value="ECO:0007669"/>
    <property type="project" value="UniProtKB-ARBA"/>
</dbReference>
<dbReference type="GO" id="GO:0005524">
    <property type="term" value="F:ATP binding"/>
    <property type="evidence" value="ECO:0007669"/>
    <property type="project" value="UniProtKB-KW"/>
</dbReference>
<dbReference type="GO" id="GO:0016887">
    <property type="term" value="F:ATP hydrolysis activity"/>
    <property type="evidence" value="ECO:0007669"/>
    <property type="project" value="InterPro"/>
</dbReference>
<dbReference type="CDD" id="cd19502">
    <property type="entry name" value="RecA-like_PAN_like"/>
    <property type="match status" value="1"/>
</dbReference>
<dbReference type="FunFam" id="3.40.50.300:FF:000033">
    <property type="entry name" value="26S protease regulatory subunit 6B"/>
    <property type="match status" value="1"/>
</dbReference>
<dbReference type="Gene3D" id="1.10.8.60">
    <property type="match status" value="1"/>
</dbReference>
<dbReference type="Gene3D" id="2.40.50.140">
    <property type="entry name" value="Nucleic acid-binding proteins"/>
    <property type="match status" value="1"/>
</dbReference>
<dbReference type="Gene3D" id="3.40.50.300">
    <property type="entry name" value="P-loop containing nucleotide triphosphate hydrolases"/>
    <property type="match status" value="1"/>
</dbReference>
<dbReference type="InterPro" id="IPR050221">
    <property type="entry name" value="26S_Proteasome_ATPase"/>
</dbReference>
<dbReference type="InterPro" id="IPR003593">
    <property type="entry name" value="AAA+_ATPase"/>
</dbReference>
<dbReference type="InterPro" id="IPR041569">
    <property type="entry name" value="AAA_lid_3"/>
</dbReference>
<dbReference type="InterPro" id="IPR003959">
    <property type="entry name" value="ATPase_AAA_core"/>
</dbReference>
<dbReference type="InterPro" id="IPR003960">
    <property type="entry name" value="ATPase_AAA_CS"/>
</dbReference>
<dbReference type="InterPro" id="IPR012340">
    <property type="entry name" value="NA-bd_OB-fold"/>
</dbReference>
<dbReference type="InterPro" id="IPR027417">
    <property type="entry name" value="P-loop_NTPase"/>
</dbReference>
<dbReference type="InterPro" id="IPR032501">
    <property type="entry name" value="Prot_ATP_ID_OB_2nd"/>
</dbReference>
<dbReference type="PANTHER" id="PTHR23073">
    <property type="entry name" value="26S PROTEASOME REGULATORY SUBUNIT"/>
    <property type="match status" value="1"/>
</dbReference>
<dbReference type="Pfam" id="PF00004">
    <property type="entry name" value="AAA"/>
    <property type="match status" value="1"/>
</dbReference>
<dbReference type="Pfam" id="PF17862">
    <property type="entry name" value="AAA_lid_3"/>
    <property type="match status" value="1"/>
</dbReference>
<dbReference type="Pfam" id="PF16450">
    <property type="entry name" value="Prot_ATP_ID_OB_C"/>
    <property type="match status" value="1"/>
</dbReference>
<dbReference type="SMART" id="SM00382">
    <property type="entry name" value="AAA"/>
    <property type="match status" value="1"/>
</dbReference>
<dbReference type="SUPFAM" id="SSF52540">
    <property type="entry name" value="P-loop containing nucleoside triphosphate hydrolases"/>
    <property type="match status" value="1"/>
</dbReference>
<dbReference type="PROSITE" id="PS00674">
    <property type="entry name" value="AAA"/>
    <property type="match status" value="1"/>
</dbReference>
<reference key="1">
    <citation type="journal article" date="2001" name="Nature">
        <title>Genome sequence and gene compaction of the eukaryote parasite Encephalitozoon cuniculi.</title>
        <authorList>
            <person name="Katinka M.D."/>
            <person name="Duprat S."/>
            <person name="Cornillot E."/>
            <person name="Metenier G."/>
            <person name="Thomarat F."/>
            <person name="Prensier G."/>
            <person name="Barbe V."/>
            <person name="Peyretaillade E."/>
            <person name="Brottier P."/>
            <person name="Wincker P."/>
            <person name="Delbac F."/>
            <person name="El Alaoui H."/>
            <person name="Peyret P."/>
            <person name="Saurin W."/>
            <person name="Gouy M."/>
            <person name="Weissenbach J."/>
            <person name="Vivares C.P."/>
        </authorList>
    </citation>
    <scope>NUCLEOTIDE SEQUENCE [LARGE SCALE GENOMIC DNA]</scope>
    <source>
        <strain>GB-M1</strain>
    </source>
</reference>
<reference key="2">
    <citation type="journal article" date="2006" name="Proteomics">
        <title>Proteomic analysis of the eukaryotic parasite Encephalitozoon cuniculi (microsporidia): a reference map for proteins expressed in late sporogonial stages.</title>
        <authorList>
            <person name="Brosson D."/>
            <person name="Kuhn L."/>
            <person name="Delbac F."/>
            <person name="Garin J."/>
            <person name="Vivares C.P."/>
            <person name="Texier C."/>
        </authorList>
    </citation>
    <scope>IDENTIFICATION BY MASS SPECTROMETRY [LARGE SCALE ANALYSIS]</scope>
    <scope>DEVELOPMENTAL STAGE</scope>
</reference>
<sequence length="387" mass="43334">MSARLKGGLFVRYKQMERKLRLLEIREGYVRKEIETLKREERHSREELDRVKSVPLIMGQFLEPIDSSTAIVGSTAGSNFVVRILSTVDRELLKPNTTVALHRHSSAIVGVLPPEVDSTIPVMGESEKPSVTYGDVGGLDVQKQEIKETVELPLLQSDLYRQIGIDPPQGVLLYGPPGTGKTMLVKAVANHTKATFIRVNGSEFVQKYLGEGPRMVRDVFRLAREKAPSIVFIDEVDSIATKRFDASTSADREVQRVLIELLNQMDGFDPAANVKVIMATNRADTIDPALLRPGRLDRKIEFPLPDRRQKRLVFNAITSKMSLNDSVDIESLVCRPEKISCADINSICQEAGMLAVRASRYMVTQRDFEEAYSKVVERSGTQPAFYN</sequence>
<feature type="chain" id="PRO_0000084695" description="26S proteasome regulatory subunit 6B homolog">
    <location>
        <begin position="1"/>
        <end position="387"/>
    </location>
</feature>
<feature type="binding site" evidence="2">
    <location>
        <begin position="175"/>
        <end position="182"/>
    </location>
    <ligand>
        <name>ATP</name>
        <dbReference type="ChEBI" id="CHEBI:30616"/>
    </ligand>
</feature>
<evidence type="ECO:0000250" key="1"/>
<evidence type="ECO:0000255" key="2"/>
<evidence type="ECO:0000269" key="3">
    <source>
    </source>
</evidence>
<evidence type="ECO:0000305" key="4"/>
<accession>Q8SQI9</accession>
<organism>
    <name type="scientific">Encephalitozoon cuniculi (strain GB-M1)</name>
    <name type="common">Microsporidian parasite</name>
    <dbReference type="NCBI Taxonomy" id="284813"/>
    <lineage>
        <taxon>Eukaryota</taxon>
        <taxon>Fungi</taxon>
        <taxon>Fungi incertae sedis</taxon>
        <taxon>Microsporidia</taxon>
        <taxon>Unikaryonidae</taxon>
        <taxon>Encephalitozoon</taxon>
    </lineage>
</organism>
<gene>
    <name type="ordered locus">ECU08_1970</name>
</gene>
<gene>
    <name type="ordered locus">ECU10_0130</name>
</gene>
<keyword id="KW-0067">ATP-binding</keyword>
<keyword id="KW-0963">Cytoplasm</keyword>
<keyword id="KW-0547">Nucleotide-binding</keyword>
<keyword id="KW-0539">Nucleus</keyword>
<keyword id="KW-0647">Proteasome</keyword>
<keyword id="KW-1185">Reference proteome</keyword>
<proteinExistence type="evidence at protein level"/>
<name>PRS6B_ENCCU</name>